<name>KDPC_RHIR8</name>
<dbReference type="EMBL" id="CP000629">
    <property type="protein sequence ID" value="ACM30501.1"/>
    <property type="molecule type" value="Genomic_DNA"/>
</dbReference>
<dbReference type="RefSeq" id="WP_015917798.1">
    <property type="nucleotide sequence ID" value="NC_011983.1"/>
</dbReference>
<dbReference type="SMR" id="B9JKQ9"/>
<dbReference type="STRING" id="311403.Arad_9464"/>
<dbReference type="KEGG" id="ara:Arad_9464"/>
<dbReference type="eggNOG" id="COG2156">
    <property type="taxonomic scope" value="Bacteria"/>
</dbReference>
<dbReference type="HOGENOM" id="CLU_077094_2_0_5"/>
<dbReference type="Proteomes" id="UP000001600">
    <property type="component" value="Chromosome 2"/>
</dbReference>
<dbReference type="GO" id="GO:0005886">
    <property type="term" value="C:plasma membrane"/>
    <property type="evidence" value="ECO:0007669"/>
    <property type="project" value="UniProtKB-SubCell"/>
</dbReference>
<dbReference type="GO" id="GO:0005524">
    <property type="term" value="F:ATP binding"/>
    <property type="evidence" value="ECO:0007669"/>
    <property type="project" value="UniProtKB-UniRule"/>
</dbReference>
<dbReference type="GO" id="GO:0008556">
    <property type="term" value="F:P-type potassium transmembrane transporter activity"/>
    <property type="evidence" value="ECO:0007669"/>
    <property type="project" value="InterPro"/>
</dbReference>
<dbReference type="HAMAP" id="MF_00276">
    <property type="entry name" value="KdpC"/>
    <property type="match status" value="1"/>
</dbReference>
<dbReference type="InterPro" id="IPR003820">
    <property type="entry name" value="KdpC"/>
</dbReference>
<dbReference type="NCBIfam" id="TIGR00681">
    <property type="entry name" value="kdpC"/>
    <property type="match status" value="1"/>
</dbReference>
<dbReference type="NCBIfam" id="NF001454">
    <property type="entry name" value="PRK00315.1"/>
    <property type="match status" value="1"/>
</dbReference>
<dbReference type="NCBIfam" id="NF010603">
    <property type="entry name" value="PRK13999.1"/>
    <property type="match status" value="1"/>
</dbReference>
<dbReference type="PANTHER" id="PTHR30042">
    <property type="entry name" value="POTASSIUM-TRANSPORTING ATPASE C CHAIN"/>
    <property type="match status" value="1"/>
</dbReference>
<dbReference type="PANTHER" id="PTHR30042:SF2">
    <property type="entry name" value="POTASSIUM-TRANSPORTING ATPASE KDPC SUBUNIT"/>
    <property type="match status" value="1"/>
</dbReference>
<dbReference type="Pfam" id="PF02669">
    <property type="entry name" value="KdpC"/>
    <property type="match status" value="1"/>
</dbReference>
<dbReference type="PIRSF" id="PIRSF001296">
    <property type="entry name" value="K_ATPase_KdpC"/>
    <property type="match status" value="1"/>
</dbReference>
<reference key="1">
    <citation type="journal article" date="2009" name="J. Bacteriol.">
        <title>Genome sequences of three Agrobacterium biovars help elucidate the evolution of multichromosome genomes in bacteria.</title>
        <authorList>
            <person name="Slater S.C."/>
            <person name="Goldman B.S."/>
            <person name="Goodner B."/>
            <person name="Setubal J.C."/>
            <person name="Farrand S.K."/>
            <person name="Nester E.W."/>
            <person name="Burr T.J."/>
            <person name="Banta L."/>
            <person name="Dickerman A.W."/>
            <person name="Paulsen I."/>
            <person name="Otten L."/>
            <person name="Suen G."/>
            <person name="Welch R."/>
            <person name="Almeida N.F."/>
            <person name="Arnold F."/>
            <person name="Burton O.T."/>
            <person name="Du Z."/>
            <person name="Ewing A."/>
            <person name="Godsy E."/>
            <person name="Heisel S."/>
            <person name="Houmiel K.L."/>
            <person name="Jhaveri J."/>
            <person name="Lu J."/>
            <person name="Miller N.M."/>
            <person name="Norton S."/>
            <person name="Chen Q."/>
            <person name="Phoolcharoen W."/>
            <person name="Ohlin V."/>
            <person name="Ondrusek D."/>
            <person name="Pride N."/>
            <person name="Stricklin S.L."/>
            <person name="Sun J."/>
            <person name="Wheeler C."/>
            <person name="Wilson L."/>
            <person name="Zhu H."/>
            <person name="Wood D.W."/>
        </authorList>
    </citation>
    <scope>NUCLEOTIDE SEQUENCE [LARGE SCALE GENOMIC DNA]</scope>
    <source>
        <strain>K84 / ATCC BAA-868</strain>
    </source>
</reference>
<organism>
    <name type="scientific">Rhizobium rhizogenes (strain K84 / ATCC BAA-868)</name>
    <name type="common">Agrobacterium radiobacter</name>
    <dbReference type="NCBI Taxonomy" id="311403"/>
    <lineage>
        <taxon>Bacteria</taxon>
        <taxon>Pseudomonadati</taxon>
        <taxon>Pseudomonadota</taxon>
        <taxon>Alphaproteobacteria</taxon>
        <taxon>Hyphomicrobiales</taxon>
        <taxon>Rhizobiaceae</taxon>
        <taxon>Rhizobium/Agrobacterium group</taxon>
        <taxon>Rhizobium</taxon>
    </lineage>
</organism>
<protein>
    <recommendedName>
        <fullName evidence="1">Potassium-transporting ATPase KdpC subunit</fullName>
    </recommendedName>
    <alternativeName>
        <fullName evidence="1">ATP phosphohydrolase [potassium-transporting] C chain</fullName>
    </alternativeName>
    <alternativeName>
        <fullName evidence="1">Potassium-binding and translocating subunit C</fullName>
    </alternativeName>
    <alternativeName>
        <fullName evidence="1">Potassium-translocating ATPase C chain</fullName>
    </alternativeName>
</protein>
<feature type="chain" id="PRO_1000132508" description="Potassium-transporting ATPase KdpC subunit">
    <location>
        <begin position="1"/>
        <end position="201"/>
    </location>
</feature>
<feature type="transmembrane region" description="Helical" evidence="1">
    <location>
        <begin position="9"/>
        <end position="31"/>
    </location>
</feature>
<evidence type="ECO:0000255" key="1">
    <source>
        <dbReference type="HAMAP-Rule" id="MF_00276"/>
    </source>
</evidence>
<sequence length="201" mass="20953">MLKLIRPAIVMIVVTTAVTGLAYPLAMTGIAQALFPHQANGSLVEKDGKVIGSSLIGQSFTADRYFHGRPSATTGADPNDATKTVAAPYNASNSMGSNLGPTSSSLMTRIKGDVATLQAQNPNAPVPIDLVTTSGSGLDPHISPEDAYFQIPRVAKARGLDEAKLRTIVDAAVEPRELGVFGEPVVNVLALNQALDASMTQ</sequence>
<comment type="function">
    <text evidence="1">Part of the high-affinity ATP-driven potassium transport (or Kdp) system, which catalyzes the hydrolysis of ATP coupled with the electrogenic transport of potassium into the cytoplasm. This subunit acts as a catalytic chaperone that increases the ATP-binding affinity of the ATP-hydrolyzing subunit KdpB by the formation of a transient KdpB/KdpC/ATP ternary complex.</text>
</comment>
<comment type="subunit">
    <text evidence="1">The system is composed of three essential subunits: KdpA, KdpB and KdpC.</text>
</comment>
<comment type="subcellular location">
    <subcellularLocation>
        <location evidence="1">Cell inner membrane</location>
        <topology evidence="1">Single-pass membrane protein</topology>
    </subcellularLocation>
</comment>
<comment type="similarity">
    <text evidence="1">Belongs to the KdpC family.</text>
</comment>
<proteinExistence type="inferred from homology"/>
<accession>B9JKQ9</accession>
<gene>
    <name evidence="1" type="primary">kdpC</name>
    <name type="ordered locus">Arad_9464</name>
</gene>
<keyword id="KW-0067">ATP-binding</keyword>
<keyword id="KW-0997">Cell inner membrane</keyword>
<keyword id="KW-1003">Cell membrane</keyword>
<keyword id="KW-0406">Ion transport</keyword>
<keyword id="KW-0472">Membrane</keyword>
<keyword id="KW-0547">Nucleotide-binding</keyword>
<keyword id="KW-0630">Potassium</keyword>
<keyword id="KW-0633">Potassium transport</keyword>
<keyword id="KW-0812">Transmembrane</keyword>
<keyword id="KW-1133">Transmembrane helix</keyword>
<keyword id="KW-0813">Transport</keyword>